<comment type="function">
    <text evidence="1">Catalyzes the reversible cleavage of L-rhamnulose-1-phosphate to dihydroxyacetone phosphate (DHAP) and L-lactaldehyde.</text>
</comment>
<comment type="catalytic activity">
    <reaction evidence="1">
        <text>L-rhamnulose 1-phosphate = (S)-lactaldehyde + dihydroxyacetone phosphate</text>
        <dbReference type="Rhea" id="RHEA:19689"/>
        <dbReference type="ChEBI" id="CHEBI:18041"/>
        <dbReference type="ChEBI" id="CHEBI:57642"/>
        <dbReference type="ChEBI" id="CHEBI:58313"/>
        <dbReference type="EC" id="4.1.2.19"/>
    </reaction>
</comment>
<comment type="cofactor">
    <cofactor evidence="1">
        <name>Zn(2+)</name>
        <dbReference type="ChEBI" id="CHEBI:29105"/>
    </cofactor>
    <text evidence="1">Binds 1 zinc ion per subunit.</text>
</comment>
<comment type="pathway">
    <text evidence="1">Carbohydrate degradation; L-rhamnose degradation; glycerone phosphate from L-rhamnose: step 3/3.</text>
</comment>
<comment type="subunit">
    <text evidence="1">Homotetramer.</text>
</comment>
<comment type="subcellular location">
    <subcellularLocation>
        <location evidence="1">Cytoplasm</location>
    </subcellularLocation>
</comment>
<comment type="similarity">
    <text evidence="1">Belongs to the aldolase class II family. RhaD subfamily.</text>
</comment>
<dbReference type="EC" id="4.1.2.19" evidence="1"/>
<dbReference type="EMBL" id="CP000822">
    <property type="protein sequence ID" value="ABV14194.1"/>
    <property type="molecule type" value="Genomic_DNA"/>
</dbReference>
<dbReference type="RefSeq" id="WP_012133901.1">
    <property type="nucleotide sequence ID" value="NC_009792.1"/>
</dbReference>
<dbReference type="SMR" id="A8AL31"/>
<dbReference type="STRING" id="290338.CKO_03103"/>
<dbReference type="GeneID" id="45136899"/>
<dbReference type="KEGG" id="cko:CKO_03103"/>
<dbReference type="HOGENOM" id="CLU_076831_0_0_6"/>
<dbReference type="OrthoDB" id="9784634at2"/>
<dbReference type="UniPathway" id="UPA00541">
    <property type="reaction ID" value="UER00603"/>
</dbReference>
<dbReference type="Proteomes" id="UP000008148">
    <property type="component" value="Chromosome"/>
</dbReference>
<dbReference type="GO" id="GO:0005829">
    <property type="term" value="C:cytosol"/>
    <property type="evidence" value="ECO:0007669"/>
    <property type="project" value="TreeGrafter"/>
</dbReference>
<dbReference type="GO" id="GO:0046872">
    <property type="term" value="F:metal ion binding"/>
    <property type="evidence" value="ECO:0007669"/>
    <property type="project" value="UniProtKB-KW"/>
</dbReference>
<dbReference type="GO" id="GO:0008994">
    <property type="term" value="F:rhamnulose-1-phosphate aldolase activity"/>
    <property type="evidence" value="ECO:0007669"/>
    <property type="project" value="UniProtKB-UniRule"/>
</dbReference>
<dbReference type="GO" id="GO:0019323">
    <property type="term" value="P:pentose catabolic process"/>
    <property type="evidence" value="ECO:0007669"/>
    <property type="project" value="TreeGrafter"/>
</dbReference>
<dbReference type="GO" id="GO:0019301">
    <property type="term" value="P:rhamnose catabolic process"/>
    <property type="evidence" value="ECO:0007669"/>
    <property type="project" value="UniProtKB-UniRule"/>
</dbReference>
<dbReference type="CDD" id="cd00398">
    <property type="entry name" value="Aldolase_II"/>
    <property type="match status" value="1"/>
</dbReference>
<dbReference type="FunFam" id="3.40.225.10:FF:000006">
    <property type="entry name" value="Rhamnulose-1-phosphate aldolase"/>
    <property type="match status" value="1"/>
</dbReference>
<dbReference type="Gene3D" id="3.40.225.10">
    <property type="entry name" value="Class II aldolase/adducin N-terminal domain"/>
    <property type="match status" value="1"/>
</dbReference>
<dbReference type="HAMAP" id="MF_00770">
    <property type="entry name" value="RhaD"/>
    <property type="match status" value="1"/>
</dbReference>
<dbReference type="InterPro" id="IPR050197">
    <property type="entry name" value="Aldolase_class_II_sugar_metab"/>
</dbReference>
<dbReference type="InterPro" id="IPR001303">
    <property type="entry name" value="Aldolase_II/adducin_N"/>
</dbReference>
<dbReference type="InterPro" id="IPR036409">
    <property type="entry name" value="Aldolase_II/adducin_N_sf"/>
</dbReference>
<dbReference type="InterPro" id="IPR013447">
    <property type="entry name" value="Rhamnulose-1-P_Aldolase"/>
</dbReference>
<dbReference type="NCBIfam" id="NF002963">
    <property type="entry name" value="PRK03634.1"/>
    <property type="match status" value="1"/>
</dbReference>
<dbReference type="NCBIfam" id="TIGR02624">
    <property type="entry name" value="rhamnu_1P_ald"/>
    <property type="match status" value="1"/>
</dbReference>
<dbReference type="PANTHER" id="PTHR22789">
    <property type="entry name" value="FUCULOSE PHOSPHATE ALDOLASE"/>
    <property type="match status" value="1"/>
</dbReference>
<dbReference type="PANTHER" id="PTHR22789:SF16">
    <property type="entry name" value="RHAMNULOSE-1-PHOSPHATE ALDOLASE"/>
    <property type="match status" value="1"/>
</dbReference>
<dbReference type="Pfam" id="PF00596">
    <property type="entry name" value="Aldolase_II"/>
    <property type="match status" value="1"/>
</dbReference>
<dbReference type="SMART" id="SM01007">
    <property type="entry name" value="Aldolase_II"/>
    <property type="match status" value="1"/>
</dbReference>
<dbReference type="SUPFAM" id="SSF53639">
    <property type="entry name" value="AraD/HMP-PK domain-like"/>
    <property type="match status" value="1"/>
</dbReference>
<protein>
    <recommendedName>
        <fullName evidence="1">Rhamnulose-1-phosphate aldolase</fullName>
        <ecNumber evidence="1">4.1.2.19</ecNumber>
    </recommendedName>
</protein>
<keyword id="KW-0963">Cytoplasm</keyword>
<keyword id="KW-0456">Lyase</keyword>
<keyword id="KW-0479">Metal-binding</keyword>
<keyword id="KW-1185">Reference proteome</keyword>
<keyword id="KW-0684">Rhamnose metabolism</keyword>
<keyword id="KW-0862">Zinc</keyword>
<gene>
    <name evidence="1" type="primary">rhaD</name>
    <name type="ordered locus">CKO_03103</name>
</gene>
<proteinExistence type="inferred from homology"/>
<feature type="chain" id="PRO_1000017336" description="Rhamnulose-1-phosphate aldolase">
    <location>
        <begin position="1"/>
        <end position="275"/>
    </location>
</feature>
<feature type="active site" evidence="1">
    <location>
        <position position="117"/>
    </location>
</feature>
<feature type="binding site" evidence="1">
    <location>
        <position position="141"/>
    </location>
    <ligand>
        <name>Zn(2+)</name>
        <dbReference type="ChEBI" id="CHEBI:29105"/>
    </ligand>
</feature>
<feature type="binding site" evidence="1">
    <location>
        <position position="143"/>
    </location>
    <ligand>
        <name>Zn(2+)</name>
        <dbReference type="ChEBI" id="CHEBI:29105"/>
    </ligand>
</feature>
<feature type="binding site" evidence="1">
    <location>
        <position position="212"/>
    </location>
    <ligand>
        <name>Zn(2+)</name>
        <dbReference type="ChEBI" id="CHEBI:29105"/>
    </ligand>
</feature>
<sequence>MQNITHSWFVQGMIKATSDAWLKGWDERNGGNLTLRLDEADIAPFTDDFHQEPRYIALSQPMPLLANTPFIVTGSGKFFRNVQLDPAANLGVVKVDSDGAGYHILWGLNHEAVPTSELPAHFLSHCERINATDGKDRVIMHCHATNLIALTYVLENNTPLFTRKLWEGSTECLVVFPDGVGILPWMVPGTDEIGQATAQEMQKHSLVLWPFHGVFGSGPTLDETFGLIDTAEKSAEVLVKIYSMGGMKQTITREELVALGKRFGVTPLASALALY</sequence>
<evidence type="ECO:0000255" key="1">
    <source>
        <dbReference type="HAMAP-Rule" id="MF_00770"/>
    </source>
</evidence>
<name>RHAD_CITK8</name>
<accession>A8AL31</accession>
<reference key="1">
    <citation type="submission" date="2007-08" db="EMBL/GenBank/DDBJ databases">
        <authorList>
            <consortium name="The Citrobacter koseri Genome Sequencing Project"/>
            <person name="McClelland M."/>
            <person name="Sanderson E.K."/>
            <person name="Porwollik S."/>
            <person name="Spieth J."/>
            <person name="Clifton W.S."/>
            <person name="Latreille P."/>
            <person name="Courtney L."/>
            <person name="Wang C."/>
            <person name="Pepin K."/>
            <person name="Bhonagiri V."/>
            <person name="Nash W."/>
            <person name="Johnson M."/>
            <person name="Thiruvilangam P."/>
            <person name="Wilson R."/>
        </authorList>
    </citation>
    <scope>NUCLEOTIDE SEQUENCE [LARGE SCALE GENOMIC DNA]</scope>
    <source>
        <strain>ATCC BAA-895 / CDC 4225-83 / SGSC4696</strain>
    </source>
</reference>
<organism>
    <name type="scientific">Citrobacter koseri (strain ATCC BAA-895 / CDC 4225-83 / SGSC4696)</name>
    <dbReference type="NCBI Taxonomy" id="290338"/>
    <lineage>
        <taxon>Bacteria</taxon>
        <taxon>Pseudomonadati</taxon>
        <taxon>Pseudomonadota</taxon>
        <taxon>Gammaproteobacteria</taxon>
        <taxon>Enterobacterales</taxon>
        <taxon>Enterobacteriaceae</taxon>
        <taxon>Citrobacter</taxon>
    </lineage>
</organism>